<proteinExistence type="inferred from homology"/>
<evidence type="ECO:0000255" key="1"/>
<evidence type="ECO:0000303" key="2">
    <source>
    </source>
</evidence>
<evidence type="ECO:0000303" key="3">
    <source>
    </source>
</evidence>
<evidence type="ECO:0000305" key="4"/>
<evidence type="ECO:0000305" key="5">
    <source>
    </source>
</evidence>
<keyword id="KW-0166">Nematocyst</keyword>
<keyword id="KW-0964">Secreted</keyword>
<keyword id="KW-0732">Signal</keyword>
<keyword id="KW-0800">Toxin</keyword>
<accession>P0DMZ3</accession>
<organism>
    <name type="scientific">Anemonia viridis</name>
    <name type="common">Snakelocks anemone</name>
    <dbReference type="NCBI Taxonomy" id="51769"/>
    <lineage>
        <taxon>Eukaryota</taxon>
        <taxon>Metazoa</taxon>
        <taxon>Cnidaria</taxon>
        <taxon>Anthozoa</taxon>
        <taxon>Hexacorallia</taxon>
        <taxon>Actiniaria</taxon>
        <taxon>Actiniidae</taxon>
        <taxon>Anemonia</taxon>
    </lineage>
</organism>
<dbReference type="EMBL" id="FK752567">
    <property type="status" value="NOT_ANNOTATED_CDS"/>
    <property type="molecule type" value="mRNA"/>
</dbReference>
<dbReference type="EMBL" id="FK758080">
    <property type="status" value="NOT_ANNOTATED_CDS"/>
    <property type="molecule type" value="mRNA"/>
</dbReference>
<dbReference type="EMBL" id="FK726322">
    <property type="status" value="NOT_ANNOTATED_CDS"/>
    <property type="molecule type" value="mRNA"/>
</dbReference>
<dbReference type="EMBL" id="FK721446">
    <property type="status" value="NOT_ANNOTATED_CDS"/>
    <property type="molecule type" value="mRNA"/>
</dbReference>
<dbReference type="EMBL" id="FK753446">
    <property type="status" value="NOT_ANNOTATED_CDS"/>
    <property type="molecule type" value="mRNA"/>
</dbReference>
<dbReference type="EMBL" id="FK739257">
    <property type="status" value="NOT_ANNOTATED_CDS"/>
    <property type="molecule type" value="mRNA"/>
</dbReference>
<dbReference type="EMBL" id="FK758248">
    <property type="status" value="NOT_ANNOTATED_CDS"/>
    <property type="molecule type" value="mRNA"/>
</dbReference>
<dbReference type="EMBL" id="FK746508">
    <property type="status" value="NOT_ANNOTATED_CDS"/>
    <property type="molecule type" value="mRNA"/>
</dbReference>
<dbReference type="EMBL" id="FK720062">
    <property type="status" value="NOT_ANNOTATED_CDS"/>
    <property type="molecule type" value="mRNA"/>
</dbReference>
<dbReference type="EMBL" id="FK734697">
    <property type="status" value="NOT_ANNOTATED_CDS"/>
    <property type="molecule type" value="mRNA"/>
</dbReference>
<dbReference type="EMBL" id="FK744639">
    <property type="status" value="NOT_ANNOTATED_CDS"/>
    <property type="molecule type" value="mRNA"/>
</dbReference>
<dbReference type="EMBL" id="FK750058">
    <property type="status" value="NOT_ANNOTATED_CDS"/>
    <property type="molecule type" value="mRNA"/>
</dbReference>
<dbReference type="EMBL" id="FK757190">
    <property type="status" value="NOT_ANNOTATED_CDS"/>
    <property type="molecule type" value="mRNA"/>
</dbReference>
<dbReference type="SMR" id="P0DMZ3"/>
<dbReference type="GO" id="GO:0005576">
    <property type="term" value="C:extracellular region"/>
    <property type="evidence" value="ECO:0007669"/>
    <property type="project" value="UniProtKB-SubCell"/>
</dbReference>
<dbReference type="GO" id="GO:0042151">
    <property type="term" value="C:nematocyst"/>
    <property type="evidence" value="ECO:0007669"/>
    <property type="project" value="UniProtKB-SubCell"/>
</dbReference>
<dbReference type="GO" id="GO:0090729">
    <property type="term" value="F:toxin activity"/>
    <property type="evidence" value="ECO:0007669"/>
    <property type="project" value="UniProtKB-KW"/>
</dbReference>
<reference key="1">
    <citation type="journal article" date="2009" name="BMC Genomics">
        <title>Comprehensive EST analysis of the symbiotic sea anemone, Anemonia viridis.</title>
        <authorList>
            <person name="Sabourault C."/>
            <person name="Ganot P."/>
            <person name="Deleury E."/>
            <person name="Allemand D."/>
            <person name="Furla P."/>
        </authorList>
    </citation>
    <scope>NUCLEOTIDE SEQUENCE [MRNA]</scope>
</reference>
<reference key="2">
    <citation type="journal article" date="2011" name="BMC Genomics">
        <title>The mining of toxin-like polypeptides from EST database by single residue distribution analysis.</title>
        <authorList>
            <person name="Kozlov S."/>
            <person name="Grishin E."/>
        </authorList>
    </citation>
    <scope>NOMENCLATURE</scope>
</reference>
<reference key="3">
    <citation type="journal article" date="2012" name="Toxicon">
        <title>Development of a rational nomenclature for naming peptide and protein toxins from sea anemones.</title>
        <authorList>
            <person name="Oliveira J.S."/>
            <person name="Fuentes-Silva D."/>
            <person name="King G.F."/>
        </authorList>
    </citation>
    <scope>NOMENCLATURE</scope>
</reference>
<protein>
    <recommendedName>
        <fullName evidence="3">U-actitoxin-Avd8a</fullName>
        <shortName evidence="3">U-AITX-Avd8a</shortName>
    </recommendedName>
    <alternativeName>
        <fullName evidence="2">Avtx-1</fullName>
    </alternativeName>
</protein>
<sequence>MKSLVIVFVVLLGVAMISANEEELLAILQDQRNDARGGCMNRYKSNICGTLVTPMNCIAPRTRMGKFARKFCQFMCGIC</sequence>
<name>TX8A_ANEVI</name>
<comment type="subcellular location">
    <subcellularLocation>
        <location evidence="4">Secreted</location>
    </subcellularLocation>
    <subcellularLocation>
        <location evidence="4">Nematocyst</location>
    </subcellularLocation>
</comment>
<comment type="similarity">
    <text evidence="4">Belongs to the sea anemone 8 toxin family.</text>
</comment>
<comment type="caution">
    <text evidence="4">Opinions are divided on whether Anemonia viridis (Forsskal, 1775) and Anemonia sulcata (Pennant, 1777) are separate species.</text>
</comment>
<feature type="signal peptide" evidence="1">
    <location>
        <begin position="1"/>
        <end position="19"/>
    </location>
</feature>
<feature type="propeptide" id="PRO_0000433703" evidence="5">
    <location>
        <begin position="20"/>
        <end position="36"/>
    </location>
</feature>
<feature type="chain" id="PRO_0000433704" description="U-actitoxin-Avd8a">
    <location>
        <begin position="37"/>
        <end position="79"/>
    </location>
</feature>